<sequence>MKKTGLALVLATILLGMMGSVHAQEPRVVKVPACIGLNQSQVATQVKRDFLQNRIPRWEADKKQLGTDKPVVWINVVDIIGKDDIWQVPLIARGNKGDKTYQVVLDCKSGTMTYTGLNAQTRPDPQIGLNSQAGPK</sequence>
<feature type="signal peptide" evidence="1">
    <location>
        <begin position="1"/>
        <end position="23"/>
    </location>
</feature>
<feature type="chain" id="PRO_1000068533" description="Protein YebF">
    <location>
        <begin position="24"/>
        <end position="136"/>
    </location>
</feature>
<feature type="domain" description="YebF/Cmi" evidence="2">
    <location>
        <begin position="30"/>
        <end position="117"/>
    </location>
</feature>
<feature type="region of interest" description="Disordered" evidence="3">
    <location>
        <begin position="117"/>
        <end position="136"/>
    </location>
</feature>
<feature type="disulfide bond" evidence="2">
    <location>
        <begin position="34"/>
        <end position="107"/>
    </location>
</feature>
<organism>
    <name type="scientific">Yersinia pseudotuberculosis serotype O:1b (strain IP 31758)</name>
    <dbReference type="NCBI Taxonomy" id="349747"/>
    <lineage>
        <taxon>Bacteria</taxon>
        <taxon>Pseudomonadati</taxon>
        <taxon>Pseudomonadota</taxon>
        <taxon>Gammaproteobacteria</taxon>
        <taxon>Enterobacterales</taxon>
        <taxon>Yersiniaceae</taxon>
        <taxon>Yersinia</taxon>
    </lineage>
</organism>
<protein>
    <recommendedName>
        <fullName evidence="1">Protein YebF</fullName>
    </recommendedName>
</protein>
<reference key="1">
    <citation type="journal article" date="2007" name="PLoS Genet.">
        <title>The complete genome sequence of Yersinia pseudotuberculosis IP31758, the causative agent of Far East scarlet-like fever.</title>
        <authorList>
            <person name="Eppinger M."/>
            <person name="Rosovitz M.J."/>
            <person name="Fricke W.F."/>
            <person name="Rasko D.A."/>
            <person name="Kokorina G."/>
            <person name="Fayolle C."/>
            <person name="Lindler L.E."/>
            <person name="Carniel E."/>
            <person name="Ravel J."/>
        </authorList>
    </citation>
    <scope>NUCLEOTIDE SEQUENCE [LARGE SCALE GENOMIC DNA]</scope>
    <source>
        <strain>IP 31758</strain>
    </source>
</reference>
<name>YEBF_YERP3</name>
<dbReference type="EMBL" id="CP000720">
    <property type="protein sequence ID" value="ABS46086.1"/>
    <property type="molecule type" value="Genomic_DNA"/>
</dbReference>
<dbReference type="SMR" id="A7FJ88"/>
<dbReference type="KEGG" id="ypi:YpsIP31758_2347"/>
<dbReference type="HOGENOM" id="CLU_161319_1_0_6"/>
<dbReference type="Proteomes" id="UP000002412">
    <property type="component" value="Chromosome"/>
</dbReference>
<dbReference type="GO" id="GO:0005576">
    <property type="term" value="C:extracellular region"/>
    <property type="evidence" value="ECO:0007669"/>
    <property type="project" value="UniProtKB-SubCell"/>
</dbReference>
<dbReference type="Gene3D" id="3.10.450.300">
    <property type="entry name" value="YebF/Colicin-M immunity protein"/>
    <property type="match status" value="1"/>
</dbReference>
<dbReference type="HAMAP" id="MF_01435">
    <property type="entry name" value="YebF"/>
    <property type="match status" value="1"/>
</dbReference>
<dbReference type="InterPro" id="IPR020236">
    <property type="entry name" value="Uncharacterised_YebF"/>
</dbReference>
<dbReference type="InterPro" id="IPR038703">
    <property type="entry name" value="YebF/Cmi_sf"/>
</dbReference>
<dbReference type="InterPro" id="IPR025603">
    <property type="entry name" value="YebF/ColM_immunity"/>
</dbReference>
<dbReference type="NCBIfam" id="NF010224">
    <property type="entry name" value="PRK13680.1"/>
    <property type="match status" value="1"/>
</dbReference>
<dbReference type="NCBIfam" id="NF041240">
    <property type="entry name" value="YebF_not_Cmi"/>
    <property type="match status" value="1"/>
</dbReference>
<dbReference type="Pfam" id="PF13995">
    <property type="entry name" value="YebF"/>
    <property type="match status" value="1"/>
</dbReference>
<dbReference type="PROSITE" id="PS51979">
    <property type="entry name" value="YEBF_CMI"/>
    <property type="match status" value="1"/>
</dbReference>
<keyword id="KW-1015">Disulfide bond</keyword>
<keyword id="KW-0964">Secreted</keyword>
<keyword id="KW-0732">Signal</keyword>
<accession>A7FJ88</accession>
<gene>
    <name evidence="1" type="primary">yebF</name>
    <name type="ordered locus">YpsIP31758_2347</name>
</gene>
<comment type="subcellular location">
    <subcellularLocation>
        <location evidence="1">Secreted</location>
    </subcellularLocation>
</comment>
<comment type="similarity">
    <text evidence="1">Belongs to the YebF family.</text>
</comment>
<evidence type="ECO:0000255" key="1">
    <source>
        <dbReference type="HAMAP-Rule" id="MF_01435"/>
    </source>
</evidence>
<evidence type="ECO:0000255" key="2">
    <source>
        <dbReference type="PROSITE-ProRule" id="PRU01323"/>
    </source>
</evidence>
<evidence type="ECO:0000256" key="3">
    <source>
        <dbReference type="SAM" id="MobiDB-lite"/>
    </source>
</evidence>
<proteinExistence type="inferred from homology"/>